<accession>Q0SRE9</accession>
<sequence length="313" mass="34756">MEGTWIEVRVITKSEALEPISGIFYGLDCKGVAIEDPNDILGREQGPLTWDFADINILEHKGKVAVVKGYFSEEDNIDDVIAYVKERVEELKESGLDVGEGTVEAEKMFEEDWANNWKKYYKPIKIGEKIVIKPIWEEYEPTGEEMVVELDPGMAFGTGDHETTRMCVQALDKYVKADTTVFDIGTGSGILALVASKLGAKHVVGVDLDPVAVDSAKENISFNNVDNIEVLYGNLLDVVDGKADIVVANIIAEIICILVDDVKKALNKDGIFITSGIIHERRQMVIDKLEQEGFEVMEVNKDGEWNCIVAKLK</sequence>
<gene>
    <name evidence="1" type="primary">prmA</name>
    <name type="ordered locus">CPR_1999</name>
</gene>
<keyword id="KW-0963">Cytoplasm</keyword>
<keyword id="KW-0489">Methyltransferase</keyword>
<keyword id="KW-0949">S-adenosyl-L-methionine</keyword>
<keyword id="KW-0808">Transferase</keyword>
<protein>
    <recommendedName>
        <fullName evidence="1">Ribosomal protein L11 methyltransferase</fullName>
        <shortName evidence="1">L11 Mtase</shortName>
        <ecNumber evidence="1">2.1.1.-</ecNumber>
    </recommendedName>
</protein>
<organism>
    <name type="scientific">Clostridium perfringens (strain SM101 / Type A)</name>
    <dbReference type="NCBI Taxonomy" id="289380"/>
    <lineage>
        <taxon>Bacteria</taxon>
        <taxon>Bacillati</taxon>
        <taxon>Bacillota</taxon>
        <taxon>Clostridia</taxon>
        <taxon>Eubacteriales</taxon>
        <taxon>Clostridiaceae</taxon>
        <taxon>Clostridium</taxon>
    </lineage>
</organism>
<reference key="1">
    <citation type="journal article" date="2006" name="Genome Res.">
        <title>Skewed genomic variability in strains of the toxigenic bacterial pathogen, Clostridium perfringens.</title>
        <authorList>
            <person name="Myers G.S.A."/>
            <person name="Rasko D.A."/>
            <person name="Cheung J.K."/>
            <person name="Ravel J."/>
            <person name="Seshadri R."/>
            <person name="DeBoy R.T."/>
            <person name="Ren Q."/>
            <person name="Varga J."/>
            <person name="Awad M.M."/>
            <person name="Brinkac L.M."/>
            <person name="Daugherty S.C."/>
            <person name="Haft D.H."/>
            <person name="Dodson R.J."/>
            <person name="Madupu R."/>
            <person name="Nelson W.C."/>
            <person name="Rosovitz M.J."/>
            <person name="Sullivan S.A."/>
            <person name="Khouri H."/>
            <person name="Dimitrov G.I."/>
            <person name="Watkins K.L."/>
            <person name="Mulligan S."/>
            <person name="Benton J."/>
            <person name="Radune D."/>
            <person name="Fisher D.J."/>
            <person name="Atkins H.S."/>
            <person name="Hiscox T."/>
            <person name="Jost B.H."/>
            <person name="Billington S.J."/>
            <person name="Songer J.G."/>
            <person name="McClane B.A."/>
            <person name="Titball R.W."/>
            <person name="Rood J.I."/>
            <person name="Melville S.B."/>
            <person name="Paulsen I.T."/>
        </authorList>
    </citation>
    <scope>NUCLEOTIDE SEQUENCE [LARGE SCALE GENOMIC DNA]</scope>
    <source>
        <strain>SM101 / Type A</strain>
    </source>
</reference>
<dbReference type="EC" id="2.1.1.-" evidence="1"/>
<dbReference type="EMBL" id="CP000312">
    <property type="protein sequence ID" value="ABG85640.1"/>
    <property type="molecule type" value="Genomic_DNA"/>
</dbReference>
<dbReference type="RefSeq" id="WP_003451530.1">
    <property type="nucleotide sequence ID" value="NC_008262.1"/>
</dbReference>
<dbReference type="SMR" id="Q0SRE9"/>
<dbReference type="KEGG" id="cpr:CPR_1999"/>
<dbReference type="Proteomes" id="UP000001824">
    <property type="component" value="Chromosome"/>
</dbReference>
<dbReference type="GO" id="GO:0005737">
    <property type="term" value="C:cytoplasm"/>
    <property type="evidence" value="ECO:0007669"/>
    <property type="project" value="UniProtKB-SubCell"/>
</dbReference>
<dbReference type="GO" id="GO:0016279">
    <property type="term" value="F:protein-lysine N-methyltransferase activity"/>
    <property type="evidence" value="ECO:0007669"/>
    <property type="project" value="RHEA"/>
</dbReference>
<dbReference type="GO" id="GO:0032259">
    <property type="term" value="P:methylation"/>
    <property type="evidence" value="ECO:0007669"/>
    <property type="project" value="UniProtKB-KW"/>
</dbReference>
<dbReference type="CDD" id="cd02440">
    <property type="entry name" value="AdoMet_MTases"/>
    <property type="match status" value="1"/>
</dbReference>
<dbReference type="Gene3D" id="3.40.50.150">
    <property type="entry name" value="Vaccinia Virus protein VP39"/>
    <property type="match status" value="1"/>
</dbReference>
<dbReference type="HAMAP" id="MF_00735">
    <property type="entry name" value="Methyltr_PrmA"/>
    <property type="match status" value="1"/>
</dbReference>
<dbReference type="InterPro" id="IPR050078">
    <property type="entry name" value="Ribosomal_L11_MeTrfase_PrmA"/>
</dbReference>
<dbReference type="InterPro" id="IPR004498">
    <property type="entry name" value="Ribosomal_PrmA_MeTrfase"/>
</dbReference>
<dbReference type="InterPro" id="IPR029063">
    <property type="entry name" value="SAM-dependent_MTases_sf"/>
</dbReference>
<dbReference type="NCBIfam" id="TIGR00406">
    <property type="entry name" value="prmA"/>
    <property type="match status" value="1"/>
</dbReference>
<dbReference type="PANTHER" id="PTHR43648">
    <property type="entry name" value="ELECTRON TRANSFER FLAVOPROTEIN BETA SUBUNIT LYSINE METHYLTRANSFERASE"/>
    <property type="match status" value="1"/>
</dbReference>
<dbReference type="PANTHER" id="PTHR43648:SF1">
    <property type="entry name" value="ELECTRON TRANSFER FLAVOPROTEIN BETA SUBUNIT LYSINE METHYLTRANSFERASE"/>
    <property type="match status" value="1"/>
</dbReference>
<dbReference type="Pfam" id="PF06325">
    <property type="entry name" value="PrmA"/>
    <property type="match status" value="1"/>
</dbReference>
<dbReference type="PIRSF" id="PIRSF000401">
    <property type="entry name" value="RPL11_MTase"/>
    <property type="match status" value="1"/>
</dbReference>
<dbReference type="SUPFAM" id="SSF53335">
    <property type="entry name" value="S-adenosyl-L-methionine-dependent methyltransferases"/>
    <property type="match status" value="1"/>
</dbReference>
<feature type="chain" id="PRO_1000046014" description="Ribosomal protein L11 methyltransferase">
    <location>
        <begin position="1"/>
        <end position="313"/>
    </location>
</feature>
<feature type="binding site" evidence="1">
    <location>
        <position position="164"/>
    </location>
    <ligand>
        <name>S-adenosyl-L-methionine</name>
        <dbReference type="ChEBI" id="CHEBI:59789"/>
    </ligand>
</feature>
<feature type="binding site" evidence="1">
    <location>
        <position position="185"/>
    </location>
    <ligand>
        <name>S-adenosyl-L-methionine</name>
        <dbReference type="ChEBI" id="CHEBI:59789"/>
    </ligand>
</feature>
<feature type="binding site" evidence="1">
    <location>
        <position position="207"/>
    </location>
    <ligand>
        <name>S-adenosyl-L-methionine</name>
        <dbReference type="ChEBI" id="CHEBI:59789"/>
    </ligand>
</feature>
<feature type="binding site" evidence="1">
    <location>
        <position position="249"/>
    </location>
    <ligand>
        <name>S-adenosyl-L-methionine</name>
        <dbReference type="ChEBI" id="CHEBI:59789"/>
    </ligand>
</feature>
<comment type="function">
    <text evidence="1">Methylates ribosomal protein L11.</text>
</comment>
<comment type="catalytic activity">
    <reaction evidence="1">
        <text>L-lysyl-[protein] + 3 S-adenosyl-L-methionine = N(6),N(6),N(6)-trimethyl-L-lysyl-[protein] + 3 S-adenosyl-L-homocysteine + 3 H(+)</text>
        <dbReference type="Rhea" id="RHEA:54192"/>
        <dbReference type="Rhea" id="RHEA-COMP:9752"/>
        <dbReference type="Rhea" id="RHEA-COMP:13826"/>
        <dbReference type="ChEBI" id="CHEBI:15378"/>
        <dbReference type="ChEBI" id="CHEBI:29969"/>
        <dbReference type="ChEBI" id="CHEBI:57856"/>
        <dbReference type="ChEBI" id="CHEBI:59789"/>
        <dbReference type="ChEBI" id="CHEBI:61961"/>
    </reaction>
</comment>
<comment type="subcellular location">
    <subcellularLocation>
        <location evidence="1">Cytoplasm</location>
    </subcellularLocation>
</comment>
<comment type="similarity">
    <text evidence="1">Belongs to the methyltransferase superfamily. PrmA family.</text>
</comment>
<proteinExistence type="inferred from homology"/>
<evidence type="ECO:0000255" key="1">
    <source>
        <dbReference type="HAMAP-Rule" id="MF_00735"/>
    </source>
</evidence>
<name>PRMA_CLOPS</name>